<sequence>MSFKTDAETAQSSTMRPIGEIAAKLGLNVDNIEPYGHYKAKINPAEAFKLPQKQGRLILVTAINPTPAGEGKTTVTIGLADALRHIGKDSVIALREPSLGPVFGVKGGAAGGGYAQVLPMEDINLHFTGDFHAIGAANNLLAAMLDNHIYQGNELNIDPKRVLWRRVVDMNDRQLRNIIDGMGKPVDGVMRPDGFDITVASEVMAVFCLAKDISDLKERFGNILVAYAKDGSPVYAKDLKAHGAMAALLKDAIKPNLVQTIEGTPAFVHGGPFANIAHGCNSVTATRLAKHLADYAVTEAGFGADLGAEKFCDIKCRLAGLKPDAAVVVATVRALKYNGGVERANLGEENLEALAKGLPNLLKHISNLKNVFGLPVVVALNRFVSDSDAELAMIEKACAEHGVEVSLTEVWGKGGAGGADLARKVVNAIDNQPNNFGFAYDVELGIKDKIRAIAQKVYGAEDVDFSAEASAEIASLEKLGLDKMPICMAKTQYSLSDNAKLLGCPEGFRITVRGITVSAGAGFIVALCGNMMKMPGLPKVPAAEKIDVDEHGVIHGLF</sequence>
<organism>
    <name type="scientific">Neisseria gonorrhoeae (strain NCCP11945)</name>
    <dbReference type="NCBI Taxonomy" id="521006"/>
    <lineage>
        <taxon>Bacteria</taxon>
        <taxon>Pseudomonadati</taxon>
        <taxon>Pseudomonadota</taxon>
        <taxon>Betaproteobacteria</taxon>
        <taxon>Neisseriales</taxon>
        <taxon>Neisseriaceae</taxon>
        <taxon>Neisseria</taxon>
    </lineage>
</organism>
<comment type="catalytic activity">
    <reaction evidence="1">
        <text>(6S)-5,6,7,8-tetrahydrofolate + formate + ATP = (6R)-10-formyltetrahydrofolate + ADP + phosphate</text>
        <dbReference type="Rhea" id="RHEA:20221"/>
        <dbReference type="ChEBI" id="CHEBI:15740"/>
        <dbReference type="ChEBI" id="CHEBI:30616"/>
        <dbReference type="ChEBI" id="CHEBI:43474"/>
        <dbReference type="ChEBI" id="CHEBI:57453"/>
        <dbReference type="ChEBI" id="CHEBI:195366"/>
        <dbReference type="ChEBI" id="CHEBI:456216"/>
        <dbReference type="EC" id="6.3.4.3"/>
    </reaction>
</comment>
<comment type="pathway">
    <text evidence="1">One-carbon metabolism; tetrahydrofolate interconversion.</text>
</comment>
<comment type="similarity">
    <text evidence="1">Belongs to the formate--tetrahydrofolate ligase family.</text>
</comment>
<evidence type="ECO:0000255" key="1">
    <source>
        <dbReference type="HAMAP-Rule" id="MF_01543"/>
    </source>
</evidence>
<proteinExistence type="inferred from homology"/>
<gene>
    <name evidence="1" type="primary">fhs</name>
    <name type="ordered locus">NGK_0086</name>
</gene>
<name>FTHS_NEIG2</name>
<feature type="chain" id="PRO_1000196819" description="Formate--tetrahydrofolate ligase">
    <location>
        <begin position="1"/>
        <end position="558"/>
    </location>
</feature>
<feature type="binding site" evidence="1">
    <location>
        <begin position="66"/>
        <end position="73"/>
    </location>
    <ligand>
        <name>ATP</name>
        <dbReference type="ChEBI" id="CHEBI:30616"/>
    </ligand>
</feature>
<reference key="1">
    <citation type="journal article" date="2008" name="J. Bacteriol.">
        <title>Complete genome sequence of Neisseria gonorrhoeae NCCP11945.</title>
        <authorList>
            <person name="Chung G.T."/>
            <person name="Yoo J.S."/>
            <person name="Oh H.B."/>
            <person name="Lee Y.S."/>
            <person name="Cha S.H."/>
            <person name="Kim S.J."/>
            <person name="Yoo C.K."/>
        </authorList>
    </citation>
    <scope>NUCLEOTIDE SEQUENCE [LARGE SCALE GENOMIC DNA]</scope>
    <source>
        <strain>NCCP11945</strain>
    </source>
</reference>
<protein>
    <recommendedName>
        <fullName evidence="1">Formate--tetrahydrofolate ligase</fullName>
        <ecNumber evidence="1">6.3.4.3</ecNumber>
    </recommendedName>
    <alternativeName>
        <fullName evidence="1">Formyltetrahydrofolate synthetase</fullName>
        <shortName evidence="1">FHS</shortName>
        <shortName evidence="1">FTHFS</shortName>
    </alternativeName>
</protein>
<dbReference type="EC" id="6.3.4.3" evidence="1"/>
<dbReference type="EMBL" id="CP001050">
    <property type="protein sequence ID" value="ACF28785.1"/>
    <property type="molecule type" value="Genomic_DNA"/>
</dbReference>
<dbReference type="RefSeq" id="WP_003687303.1">
    <property type="nucleotide sequence ID" value="NC_011035.1"/>
</dbReference>
<dbReference type="SMR" id="B4RP08"/>
<dbReference type="KEGG" id="ngk:NGK_0086"/>
<dbReference type="HOGENOM" id="CLU_003601_3_3_4"/>
<dbReference type="UniPathway" id="UPA00193"/>
<dbReference type="Proteomes" id="UP000002564">
    <property type="component" value="Chromosome"/>
</dbReference>
<dbReference type="GO" id="GO:0005524">
    <property type="term" value="F:ATP binding"/>
    <property type="evidence" value="ECO:0007669"/>
    <property type="project" value="UniProtKB-UniRule"/>
</dbReference>
<dbReference type="GO" id="GO:0004329">
    <property type="term" value="F:formate-tetrahydrofolate ligase activity"/>
    <property type="evidence" value="ECO:0007669"/>
    <property type="project" value="UniProtKB-UniRule"/>
</dbReference>
<dbReference type="GO" id="GO:0035999">
    <property type="term" value="P:tetrahydrofolate interconversion"/>
    <property type="evidence" value="ECO:0007669"/>
    <property type="project" value="UniProtKB-UniRule"/>
</dbReference>
<dbReference type="CDD" id="cd00477">
    <property type="entry name" value="FTHFS"/>
    <property type="match status" value="1"/>
</dbReference>
<dbReference type="FunFam" id="3.30.1510.10:FF:000001">
    <property type="entry name" value="Formate--tetrahydrofolate ligase"/>
    <property type="match status" value="1"/>
</dbReference>
<dbReference type="FunFam" id="3.10.410.10:FF:000001">
    <property type="entry name" value="Putative formate--tetrahydrofolate ligase"/>
    <property type="match status" value="1"/>
</dbReference>
<dbReference type="Gene3D" id="3.30.1510.10">
    <property type="entry name" value="Domain 2, N(10)-formyltetrahydrofolate synthetase"/>
    <property type="match status" value="1"/>
</dbReference>
<dbReference type="Gene3D" id="3.10.410.10">
    <property type="entry name" value="Formyltetrahydrofolate synthetase, domain 3"/>
    <property type="match status" value="1"/>
</dbReference>
<dbReference type="Gene3D" id="3.40.50.300">
    <property type="entry name" value="P-loop containing nucleotide triphosphate hydrolases"/>
    <property type="match status" value="1"/>
</dbReference>
<dbReference type="HAMAP" id="MF_01543">
    <property type="entry name" value="FTHFS"/>
    <property type="match status" value="1"/>
</dbReference>
<dbReference type="InterPro" id="IPR000559">
    <property type="entry name" value="Formate_THF_ligase"/>
</dbReference>
<dbReference type="InterPro" id="IPR020628">
    <property type="entry name" value="Formate_THF_ligase_CS"/>
</dbReference>
<dbReference type="InterPro" id="IPR027417">
    <property type="entry name" value="P-loop_NTPase"/>
</dbReference>
<dbReference type="NCBIfam" id="NF010030">
    <property type="entry name" value="PRK13505.1"/>
    <property type="match status" value="1"/>
</dbReference>
<dbReference type="Pfam" id="PF01268">
    <property type="entry name" value="FTHFS"/>
    <property type="match status" value="1"/>
</dbReference>
<dbReference type="SUPFAM" id="SSF52540">
    <property type="entry name" value="P-loop containing nucleoside triphosphate hydrolases"/>
    <property type="match status" value="1"/>
</dbReference>
<dbReference type="PROSITE" id="PS00721">
    <property type="entry name" value="FTHFS_1"/>
    <property type="match status" value="1"/>
</dbReference>
<dbReference type="PROSITE" id="PS00722">
    <property type="entry name" value="FTHFS_2"/>
    <property type="match status" value="1"/>
</dbReference>
<keyword id="KW-0067">ATP-binding</keyword>
<keyword id="KW-0436">Ligase</keyword>
<keyword id="KW-0547">Nucleotide-binding</keyword>
<keyword id="KW-0554">One-carbon metabolism</keyword>
<accession>B4RP08</accession>